<reference key="1">
    <citation type="journal article" date="2005" name="Science">
        <title>The transcriptional landscape of the mammalian genome.</title>
        <authorList>
            <person name="Carninci P."/>
            <person name="Kasukawa T."/>
            <person name="Katayama S."/>
            <person name="Gough J."/>
            <person name="Frith M.C."/>
            <person name="Maeda N."/>
            <person name="Oyama R."/>
            <person name="Ravasi T."/>
            <person name="Lenhard B."/>
            <person name="Wells C."/>
            <person name="Kodzius R."/>
            <person name="Shimokawa K."/>
            <person name="Bajic V.B."/>
            <person name="Brenner S.E."/>
            <person name="Batalov S."/>
            <person name="Forrest A.R."/>
            <person name="Zavolan M."/>
            <person name="Davis M.J."/>
            <person name="Wilming L.G."/>
            <person name="Aidinis V."/>
            <person name="Allen J.E."/>
            <person name="Ambesi-Impiombato A."/>
            <person name="Apweiler R."/>
            <person name="Aturaliya R.N."/>
            <person name="Bailey T.L."/>
            <person name="Bansal M."/>
            <person name="Baxter L."/>
            <person name="Beisel K.W."/>
            <person name="Bersano T."/>
            <person name="Bono H."/>
            <person name="Chalk A.M."/>
            <person name="Chiu K.P."/>
            <person name="Choudhary V."/>
            <person name="Christoffels A."/>
            <person name="Clutterbuck D.R."/>
            <person name="Crowe M.L."/>
            <person name="Dalla E."/>
            <person name="Dalrymple B.P."/>
            <person name="de Bono B."/>
            <person name="Della Gatta G."/>
            <person name="di Bernardo D."/>
            <person name="Down T."/>
            <person name="Engstrom P."/>
            <person name="Fagiolini M."/>
            <person name="Faulkner G."/>
            <person name="Fletcher C.F."/>
            <person name="Fukushima T."/>
            <person name="Furuno M."/>
            <person name="Futaki S."/>
            <person name="Gariboldi M."/>
            <person name="Georgii-Hemming P."/>
            <person name="Gingeras T.R."/>
            <person name="Gojobori T."/>
            <person name="Green R.E."/>
            <person name="Gustincich S."/>
            <person name="Harbers M."/>
            <person name="Hayashi Y."/>
            <person name="Hensch T.K."/>
            <person name="Hirokawa N."/>
            <person name="Hill D."/>
            <person name="Huminiecki L."/>
            <person name="Iacono M."/>
            <person name="Ikeo K."/>
            <person name="Iwama A."/>
            <person name="Ishikawa T."/>
            <person name="Jakt M."/>
            <person name="Kanapin A."/>
            <person name="Katoh M."/>
            <person name="Kawasawa Y."/>
            <person name="Kelso J."/>
            <person name="Kitamura H."/>
            <person name="Kitano H."/>
            <person name="Kollias G."/>
            <person name="Krishnan S.P."/>
            <person name="Kruger A."/>
            <person name="Kummerfeld S.K."/>
            <person name="Kurochkin I.V."/>
            <person name="Lareau L.F."/>
            <person name="Lazarevic D."/>
            <person name="Lipovich L."/>
            <person name="Liu J."/>
            <person name="Liuni S."/>
            <person name="McWilliam S."/>
            <person name="Madan Babu M."/>
            <person name="Madera M."/>
            <person name="Marchionni L."/>
            <person name="Matsuda H."/>
            <person name="Matsuzawa S."/>
            <person name="Miki H."/>
            <person name="Mignone F."/>
            <person name="Miyake S."/>
            <person name="Morris K."/>
            <person name="Mottagui-Tabar S."/>
            <person name="Mulder N."/>
            <person name="Nakano N."/>
            <person name="Nakauchi H."/>
            <person name="Ng P."/>
            <person name="Nilsson R."/>
            <person name="Nishiguchi S."/>
            <person name="Nishikawa S."/>
            <person name="Nori F."/>
            <person name="Ohara O."/>
            <person name="Okazaki Y."/>
            <person name="Orlando V."/>
            <person name="Pang K.C."/>
            <person name="Pavan W.J."/>
            <person name="Pavesi G."/>
            <person name="Pesole G."/>
            <person name="Petrovsky N."/>
            <person name="Piazza S."/>
            <person name="Reed J."/>
            <person name="Reid J.F."/>
            <person name="Ring B.Z."/>
            <person name="Ringwald M."/>
            <person name="Rost B."/>
            <person name="Ruan Y."/>
            <person name="Salzberg S.L."/>
            <person name="Sandelin A."/>
            <person name="Schneider C."/>
            <person name="Schoenbach C."/>
            <person name="Sekiguchi K."/>
            <person name="Semple C.A."/>
            <person name="Seno S."/>
            <person name="Sessa L."/>
            <person name="Sheng Y."/>
            <person name="Shibata Y."/>
            <person name="Shimada H."/>
            <person name="Shimada K."/>
            <person name="Silva D."/>
            <person name="Sinclair B."/>
            <person name="Sperling S."/>
            <person name="Stupka E."/>
            <person name="Sugiura K."/>
            <person name="Sultana R."/>
            <person name="Takenaka Y."/>
            <person name="Taki K."/>
            <person name="Tammoja K."/>
            <person name="Tan S.L."/>
            <person name="Tang S."/>
            <person name="Taylor M.S."/>
            <person name="Tegner J."/>
            <person name="Teichmann S.A."/>
            <person name="Ueda H.R."/>
            <person name="van Nimwegen E."/>
            <person name="Verardo R."/>
            <person name="Wei C.L."/>
            <person name="Yagi K."/>
            <person name="Yamanishi H."/>
            <person name="Zabarovsky E."/>
            <person name="Zhu S."/>
            <person name="Zimmer A."/>
            <person name="Hide W."/>
            <person name="Bult C."/>
            <person name="Grimmond S.M."/>
            <person name="Teasdale R.D."/>
            <person name="Liu E.T."/>
            <person name="Brusic V."/>
            <person name="Quackenbush J."/>
            <person name="Wahlestedt C."/>
            <person name="Mattick J.S."/>
            <person name="Hume D.A."/>
            <person name="Kai C."/>
            <person name="Sasaki D."/>
            <person name="Tomaru Y."/>
            <person name="Fukuda S."/>
            <person name="Kanamori-Katayama M."/>
            <person name="Suzuki M."/>
            <person name="Aoki J."/>
            <person name="Arakawa T."/>
            <person name="Iida J."/>
            <person name="Imamura K."/>
            <person name="Itoh M."/>
            <person name="Kato T."/>
            <person name="Kawaji H."/>
            <person name="Kawagashira N."/>
            <person name="Kawashima T."/>
            <person name="Kojima M."/>
            <person name="Kondo S."/>
            <person name="Konno H."/>
            <person name="Nakano K."/>
            <person name="Ninomiya N."/>
            <person name="Nishio T."/>
            <person name="Okada M."/>
            <person name="Plessy C."/>
            <person name="Shibata K."/>
            <person name="Shiraki T."/>
            <person name="Suzuki S."/>
            <person name="Tagami M."/>
            <person name="Waki K."/>
            <person name="Watahiki A."/>
            <person name="Okamura-Oho Y."/>
            <person name="Suzuki H."/>
            <person name="Kawai J."/>
            <person name="Hayashizaki Y."/>
        </authorList>
    </citation>
    <scope>NUCLEOTIDE SEQUENCE [LARGE SCALE MRNA]</scope>
    <source>
        <strain>C57BL/6J</strain>
        <tissue>Brain</tissue>
        <tissue>Hypothalamus</tissue>
        <tissue>Lung</tissue>
        <tissue>Mammary gland</tissue>
    </source>
</reference>
<reference key="2">
    <citation type="journal article" date="2004" name="Genome Res.">
        <title>The status, quality, and expansion of the NIH full-length cDNA project: the Mammalian Gene Collection (MGC).</title>
        <authorList>
            <consortium name="The MGC Project Team"/>
        </authorList>
    </citation>
    <scope>NUCLEOTIDE SEQUENCE [LARGE SCALE MRNA]</scope>
    <source>
        <tissue>Kidney</tissue>
    </source>
</reference>
<reference key="3">
    <citation type="submission" date="2007-03" db="UniProtKB">
        <authorList>
            <person name="Lubec G."/>
            <person name="Klug S."/>
        </authorList>
    </citation>
    <scope>PROTEIN SEQUENCE OF 140-160</scope>
    <scope>IDENTIFICATION BY MASS SPECTROMETRY</scope>
    <source>
        <tissue>Hippocampus</tissue>
    </source>
</reference>
<reference key="4">
    <citation type="journal article" date="2010" name="Cell">
        <title>A tissue-specific atlas of mouse protein phosphorylation and expression.</title>
        <authorList>
            <person name="Huttlin E.L."/>
            <person name="Jedrychowski M.P."/>
            <person name="Elias J.E."/>
            <person name="Goswami T."/>
            <person name="Rad R."/>
            <person name="Beausoleil S.A."/>
            <person name="Villen J."/>
            <person name="Haas W."/>
            <person name="Sowa M.E."/>
            <person name="Gygi S.P."/>
        </authorList>
    </citation>
    <scope>PHOSPHORYLATION [LARGE SCALE ANALYSIS] AT SER-59</scope>
    <scope>IDENTIFICATION BY MASS SPECTROMETRY [LARGE SCALE ANALYSIS]</scope>
    <source>
        <tissue>Brain</tissue>
        <tissue>Brown adipose tissue</tissue>
        <tissue>Heart</tissue>
        <tissue>Kidney</tissue>
        <tissue>Liver</tissue>
        <tissue>Lung</tissue>
        <tissue>Pancreas</tissue>
        <tissue>Spleen</tissue>
        <tissue>Testis</tissue>
    </source>
</reference>
<gene>
    <name evidence="4" type="primary">Pdxk</name>
    <name type="synonym">Pkh</name>
</gene>
<keyword id="KW-0002">3D-structure</keyword>
<keyword id="KW-0007">Acetylation</keyword>
<keyword id="KW-0067">ATP-binding</keyword>
<keyword id="KW-0963">Cytoplasm</keyword>
<keyword id="KW-0903">Direct protein sequencing</keyword>
<keyword id="KW-0418">Kinase</keyword>
<keyword id="KW-0460">Magnesium</keyword>
<keyword id="KW-0479">Metal-binding</keyword>
<keyword id="KW-0547">Nucleotide-binding</keyword>
<keyword id="KW-0597">Phosphoprotein</keyword>
<keyword id="KW-1185">Reference proteome</keyword>
<keyword id="KW-0915">Sodium</keyword>
<keyword id="KW-0808">Transferase</keyword>
<keyword id="KW-0862">Zinc</keyword>
<protein>
    <recommendedName>
        <fullName>Pyridoxal kinase</fullName>
        <ecNumber evidence="1">2.7.1.35</ecNumber>
    </recommendedName>
    <alternativeName>
        <fullName>Pyridoxine kinase</fullName>
    </alternativeName>
</protein>
<name>PDXK_MOUSE</name>
<comment type="function">
    <text evidence="1">Catalyzes the phosphorylation of the dietary vitamin B6 vitamers pyridoxal (PL), pyridoxine (PN) and pyridoxamine (PM) to form pyridoxal 5'-phosphate (PLP), pyridoxine 5'-phosphate (PNP) and pyridoxamine 5'-phosphate (PMP), respectively (By similarity). PLP is the active form of vitamin B6, and acts as a cofactor for over 140 different enzymatic reactions (By similarity).</text>
</comment>
<comment type="catalytic activity">
    <reaction evidence="1">
        <text>pyridoxal + ATP = pyridoxal 5'-phosphate + ADP + H(+)</text>
        <dbReference type="Rhea" id="RHEA:10224"/>
        <dbReference type="ChEBI" id="CHEBI:15378"/>
        <dbReference type="ChEBI" id="CHEBI:17310"/>
        <dbReference type="ChEBI" id="CHEBI:30616"/>
        <dbReference type="ChEBI" id="CHEBI:456216"/>
        <dbReference type="ChEBI" id="CHEBI:597326"/>
        <dbReference type="EC" id="2.7.1.35"/>
    </reaction>
    <physiologicalReaction direction="left-to-right" evidence="1">
        <dbReference type="Rhea" id="RHEA:10225"/>
    </physiologicalReaction>
</comment>
<comment type="catalytic activity">
    <reaction evidence="1">
        <text>pyridoxamine + ATP = pyridoxamine 5'-phosphate + ADP + H(+)</text>
        <dbReference type="Rhea" id="RHEA:25104"/>
        <dbReference type="ChEBI" id="CHEBI:15378"/>
        <dbReference type="ChEBI" id="CHEBI:30616"/>
        <dbReference type="ChEBI" id="CHEBI:57761"/>
        <dbReference type="ChEBI" id="CHEBI:58451"/>
        <dbReference type="ChEBI" id="CHEBI:456216"/>
        <dbReference type="EC" id="2.7.1.35"/>
    </reaction>
    <physiologicalReaction direction="left-to-right" evidence="1">
        <dbReference type="Rhea" id="RHEA:25105"/>
    </physiologicalReaction>
</comment>
<comment type="catalytic activity">
    <reaction evidence="1">
        <text>pyridoxine + ATP = pyridoxine 5'-phosphate + ADP + H(+)</text>
        <dbReference type="Rhea" id="RHEA:25108"/>
        <dbReference type="ChEBI" id="CHEBI:15378"/>
        <dbReference type="ChEBI" id="CHEBI:16709"/>
        <dbReference type="ChEBI" id="CHEBI:30616"/>
        <dbReference type="ChEBI" id="CHEBI:58589"/>
        <dbReference type="ChEBI" id="CHEBI:456216"/>
        <dbReference type="EC" id="2.7.1.35"/>
    </reaction>
    <physiologicalReaction direction="left-to-right" evidence="1">
        <dbReference type="Rhea" id="RHEA:25109"/>
    </physiologicalReaction>
</comment>
<comment type="cofactor">
    <cofactor evidence="2">
        <name>Zn(2+)</name>
        <dbReference type="ChEBI" id="CHEBI:29105"/>
    </cofactor>
    <cofactor evidence="1">
        <name>Mg(2+)</name>
        <dbReference type="ChEBI" id="CHEBI:18420"/>
    </cofactor>
</comment>
<comment type="activity regulation">
    <text evidence="1">Activity is increased in the presence of K(+)or Na(+).</text>
</comment>
<comment type="pathway">
    <text evidence="1">Cofactor metabolism; pyridoxal 5'-phosphate salvage; pyridoxal 5'-phosphate from pyridoxal: step 1/1.</text>
</comment>
<comment type="pathway">
    <text evidence="1">Cofactor metabolism; pyridoxal 5'-phosphate salvage; pyridoxine 5'-phosphate from pyridoxine: step 1/1.</text>
</comment>
<comment type="pathway">
    <text evidence="1">Cofactor metabolism; pyridoxal 5'-phosphate salvage; pyridoxamine 5'-phosphate from pyridoxamine: step 1/1.</text>
</comment>
<comment type="subunit">
    <text evidence="1">Homodimer.</text>
</comment>
<comment type="subcellular location">
    <subcellularLocation>
        <location evidence="1">Cytoplasm</location>
        <location evidence="1">Cytosol</location>
    </subcellularLocation>
</comment>
<comment type="similarity">
    <text evidence="3">Belongs to the pyridoxine kinase family.</text>
</comment>
<dbReference type="EC" id="2.7.1.35" evidence="1"/>
<dbReference type="EMBL" id="AK039194">
    <property type="protein sequence ID" value="BAC30274.1"/>
    <property type="molecule type" value="mRNA"/>
</dbReference>
<dbReference type="EMBL" id="AK080846">
    <property type="protein sequence ID" value="BAC38041.1"/>
    <property type="molecule type" value="mRNA"/>
</dbReference>
<dbReference type="EMBL" id="AK145470">
    <property type="protein sequence ID" value="BAE26454.1"/>
    <property type="molecule type" value="mRNA"/>
</dbReference>
<dbReference type="EMBL" id="AK166078">
    <property type="protein sequence ID" value="BAE38559.1"/>
    <property type="molecule type" value="mRNA"/>
</dbReference>
<dbReference type="EMBL" id="AK166464">
    <property type="protein sequence ID" value="BAE38792.1"/>
    <property type="molecule type" value="mRNA"/>
</dbReference>
<dbReference type="EMBL" id="BC027745">
    <property type="protein sequence ID" value="AAH27745.1"/>
    <property type="molecule type" value="mRNA"/>
</dbReference>
<dbReference type="CCDS" id="CCDS23965.1"/>
<dbReference type="RefSeq" id="NP_742146.1">
    <property type="nucleotide sequence ID" value="NM_172134.2"/>
</dbReference>
<dbReference type="PDB" id="6YJZ">
    <property type="method" value="X-ray"/>
    <property type="resolution" value="2.45 A"/>
    <property type="chains" value="A/B/C/D=1-312"/>
</dbReference>
<dbReference type="PDB" id="6YK0">
    <property type="method" value="X-ray"/>
    <property type="resolution" value="2.90 A"/>
    <property type="chains" value="A/B/C/D=1-312"/>
</dbReference>
<dbReference type="PDB" id="6YK1">
    <property type="method" value="X-ray"/>
    <property type="resolution" value="2.40 A"/>
    <property type="chains" value="A/B/C/D=1-312"/>
</dbReference>
<dbReference type="PDBsum" id="6YJZ"/>
<dbReference type="PDBsum" id="6YK0"/>
<dbReference type="PDBsum" id="6YK1"/>
<dbReference type="SMR" id="Q8K183"/>
<dbReference type="BioGRID" id="229701">
    <property type="interactions" value="14"/>
</dbReference>
<dbReference type="FunCoup" id="Q8K183">
    <property type="interactions" value="2161"/>
</dbReference>
<dbReference type="IntAct" id="Q8K183">
    <property type="interactions" value="3"/>
</dbReference>
<dbReference type="STRING" id="10090.ENSMUSP00000038540"/>
<dbReference type="GlyGen" id="Q8K183">
    <property type="glycosylation" value="1 site, 1 O-linked glycan (1 site)"/>
</dbReference>
<dbReference type="iPTMnet" id="Q8K183"/>
<dbReference type="MetOSite" id="Q8K183"/>
<dbReference type="PhosphoSitePlus" id="Q8K183"/>
<dbReference type="SwissPalm" id="Q8K183"/>
<dbReference type="jPOST" id="Q8K183"/>
<dbReference type="PaxDb" id="10090-ENSMUSP00000038540"/>
<dbReference type="PeptideAtlas" id="Q8K183"/>
<dbReference type="ProteomicsDB" id="289338"/>
<dbReference type="Pumba" id="Q8K183"/>
<dbReference type="Antibodypedia" id="24020">
    <property type="antibodies" value="346 antibodies from 27 providers"/>
</dbReference>
<dbReference type="DNASU" id="216134"/>
<dbReference type="Ensembl" id="ENSMUST00000041616.15">
    <property type="protein sequence ID" value="ENSMUSP00000038540.9"/>
    <property type="gene ID" value="ENSMUSG00000032788.16"/>
</dbReference>
<dbReference type="GeneID" id="216134"/>
<dbReference type="KEGG" id="mmu:216134"/>
<dbReference type="UCSC" id="uc007fxu.2">
    <property type="organism name" value="mouse"/>
</dbReference>
<dbReference type="AGR" id="MGI:1351869"/>
<dbReference type="CTD" id="8566"/>
<dbReference type="MGI" id="MGI:1351869">
    <property type="gene designation" value="Pdxk"/>
</dbReference>
<dbReference type="VEuPathDB" id="HostDB:ENSMUSG00000032788"/>
<dbReference type="eggNOG" id="KOG2599">
    <property type="taxonomic scope" value="Eukaryota"/>
</dbReference>
<dbReference type="GeneTree" id="ENSGT00390000003874"/>
<dbReference type="HOGENOM" id="CLU_046496_1_1_1"/>
<dbReference type="InParanoid" id="Q8K183"/>
<dbReference type="OMA" id="HTQYGQW"/>
<dbReference type="OrthoDB" id="2104723at2759"/>
<dbReference type="PhylomeDB" id="Q8K183"/>
<dbReference type="TreeFam" id="TF315004"/>
<dbReference type="Reactome" id="R-MMU-6798695">
    <property type="pathway name" value="Neutrophil degranulation"/>
</dbReference>
<dbReference type="Reactome" id="R-MMU-964975">
    <property type="pathway name" value="Vitamin B6 activation to pyridoxal phosphate"/>
</dbReference>
<dbReference type="UniPathway" id="UPA01068">
    <property type="reaction ID" value="UER00298"/>
</dbReference>
<dbReference type="UniPathway" id="UPA01068">
    <property type="reaction ID" value="UER00299"/>
</dbReference>
<dbReference type="UniPathway" id="UPA01068">
    <property type="reaction ID" value="UER00300"/>
</dbReference>
<dbReference type="BioGRID-ORCS" id="216134">
    <property type="hits" value="12 hits in 79 CRISPR screens"/>
</dbReference>
<dbReference type="ChiTaRS" id="Pdxk">
    <property type="organism name" value="mouse"/>
</dbReference>
<dbReference type="PRO" id="PR:Q8K183"/>
<dbReference type="Proteomes" id="UP000000589">
    <property type="component" value="Chromosome 10"/>
</dbReference>
<dbReference type="RNAct" id="Q8K183">
    <property type="molecule type" value="protein"/>
</dbReference>
<dbReference type="Bgee" id="ENSMUSG00000032788">
    <property type="expression patterns" value="Expressed in cleaving embryo and 278 other cell types or tissues"/>
</dbReference>
<dbReference type="GO" id="GO:0005829">
    <property type="term" value="C:cytosol"/>
    <property type="evidence" value="ECO:0000315"/>
    <property type="project" value="MGI"/>
</dbReference>
<dbReference type="GO" id="GO:0005654">
    <property type="term" value="C:nucleoplasm"/>
    <property type="evidence" value="ECO:0007669"/>
    <property type="project" value="Ensembl"/>
</dbReference>
<dbReference type="GO" id="GO:0005524">
    <property type="term" value="F:ATP binding"/>
    <property type="evidence" value="ECO:0007669"/>
    <property type="project" value="UniProtKB-KW"/>
</dbReference>
<dbReference type="GO" id="GO:0031403">
    <property type="term" value="F:lithium ion binding"/>
    <property type="evidence" value="ECO:0007669"/>
    <property type="project" value="Ensembl"/>
</dbReference>
<dbReference type="GO" id="GO:0000287">
    <property type="term" value="F:magnesium ion binding"/>
    <property type="evidence" value="ECO:0007669"/>
    <property type="project" value="Ensembl"/>
</dbReference>
<dbReference type="GO" id="GO:0016773">
    <property type="term" value="F:phosphotransferase activity, alcohol group as acceptor"/>
    <property type="evidence" value="ECO:0000315"/>
    <property type="project" value="MGI"/>
</dbReference>
<dbReference type="GO" id="GO:0030955">
    <property type="term" value="F:potassium ion binding"/>
    <property type="evidence" value="ECO:0007669"/>
    <property type="project" value="Ensembl"/>
</dbReference>
<dbReference type="GO" id="GO:0042803">
    <property type="term" value="F:protein homodimerization activity"/>
    <property type="evidence" value="ECO:0007669"/>
    <property type="project" value="Ensembl"/>
</dbReference>
<dbReference type="GO" id="GO:0008478">
    <property type="term" value="F:pyridoxal kinase activity"/>
    <property type="evidence" value="ECO:0000314"/>
    <property type="project" value="MGI"/>
</dbReference>
<dbReference type="GO" id="GO:0030170">
    <property type="term" value="F:pyridoxal phosphate binding"/>
    <property type="evidence" value="ECO:0007669"/>
    <property type="project" value="Ensembl"/>
</dbReference>
<dbReference type="GO" id="GO:0031402">
    <property type="term" value="F:sodium ion binding"/>
    <property type="evidence" value="ECO:0007669"/>
    <property type="project" value="Ensembl"/>
</dbReference>
<dbReference type="GO" id="GO:0008270">
    <property type="term" value="F:zinc ion binding"/>
    <property type="evidence" value="ECO:0007669"/>
    <property type="project" value="Ensembl"/>
</dbReference>
<dbReference type="GO" id="GO:0009443">
    <property type="term" value="P:pyridoxal 5'-phosphate salvage"/>
    <property type="evidence" value="ECO:0007669"/>
    <property type="project" value="Ensembl"/>
</dbReference>
<dbReference type="GO" id="GO:0042817">
    <property type="term" value="P:pyridoxal metabolic process"/>
    <property type="evidence" value="ECO:0000314"/>
    <property type="project" value="MGI"/>
</dbReference>
<dbReference type="GO" id="GO:0042822">
    <property type="term" value="P:pyridoxal phosphate metabolic process"/>
    <property type="evidence" value="ECO:0000314"/>
    <property type="project" value="MGI"/>
</dbReference>
<dbReference type="GO" id="GO:0042818">
    <property type="term" value="P:pyridoxamine metabolic process"/>
    <property type="evidence" value="ECO:0000315"/>
    <property type="project" value="MGI"/>
</dbReference>
<dbReference type="GO" id="GO:0008614">
    <property type="term" value="P:pyridoxine metabolic process"/>
    <property type="evidence" value="ECO:0000266"/>
    <property type="project" value="MGI"/>
</dbReference>
<dbReference type="CDD" id="cd01173">
    <property type="entry name" value="pyridoxal_pyridoxamine_kinase"/>
    <property type="match status" value="1"/>
</dbReference>
<dbReference type="FunFam" id="3.40.1190.20:FF:000007">
    <property type="entry name" value="Pyridoxal kinase"/>
    <property type="match status" value="1"/>
</dbReference>
<dbReference type="Gene3D" id="3.40.1190.20">
    <property type="match status" value="1"/>
</dbReference>
<dbReference type="InterPro" id="IPR013749">
    <property type="entry name" value="PM/HMP-P_kinase-1"/>
</dbReference>
<dbReference type="InterPro" id="IPR004625">
    <property type="entry name" value="PyrdxlKinase"/>
</dbReference>
<dbReference type="InterPro" id="IPR029056">
    <property type="entry name" value="Ribokinase-like"/>
</dbReference>
<dbReference type="NCBIfam" id="TIGR00687">
    <property type="entry name" value="pyridox_kin"/>
    <property type="match status" value="1"/>
</dbReference>
<dbReference type="PANTHER" id="PTHR10534">
    <property type="entry name" value="PYRIDOXAL KINASE"/>
    <property type="match status" value="1"/>
</dbReference>
<dbReference type="PANTHER" id="PTHR10534:SF2">
    <property type="entry name" value="PYRIDOXAL KINASE"/>
    <property type="match status" value="1"/>
</dbReference>
<dbReference type="Pfam" id="PF08543">
    <property type="entry name" value="Phos_pyr_kin"/>
    <property type="match status" value="1"/>
</dbReference>
<dbReference type="SUPFAM" id="SSF53613">
    <property type="entry name" value="Ribokinase-like"/>
    <property type="match status" value="1"/>
</dbReference>
<evidence type="ECO:0000250" key="1">
    <source>
        <dbReference type="UniProtKB" id="O00764"/>
    </source>
</evidence>
<evidence type="ECO:0000250" key="2">
    <source>
        <dbReference type="UniProtKB" id="P82197"/>
    </source>
</evidence>
<evidence type="ECO:0000305" key="3"/>
<evidence type="ECO:0000312" key="4">
    <source>
        <dbReference type="MGI" id="MGI:1351869"/>
    </source>
</evidence>
<evidence type="ECO:0007744" key="5">
    <source>
    </source>
</evidence>
<evidence type="ECO:0007829" key="6">
    <source>
        <dbReference type="PDB" id="6YK0"/>
    </source>
</evidence>
<evidence type="ECO:0007829" key="7">
    <source>
        <dbReference type="PDB" id="6YK1"/>
    </source>
</evidence>
<accession>Q8K183</accession>
<accession>Q3TM83</accession>
<accession>Q8BJQ5</accession>
<sequence>MEGECRVLSIQSHVVRGYVGNRAAMFPLQVLGFEVDAVNSVQFSNHTGYAHWKGQVLKSQELHELYEGLKVNDVNKYDYVLTGYTRDKSFLAMVVDIVRELKQQNSRLVYVCDPVMGDKWNGEGSMYVPQDLLPVYRDKVVPVADIITPNQFEAELLSGRKIHSQEEAFEVMDMLHCMGPDTVVITSSDLPSSQGSDYLIALGSQRMRKPDGSTVTQRIRMEMRKVEAVFVGTGDLFAAMLLAWTHKHPDNLKVACEKTVSAMQHVLQRTIRCAKAEAGEGQKPSPAQLELRMVQSKRDIEDPEIVVQATVL</sequence>
<proteinExistence type="evidence at protein level"/>
<feature type="chain" id="PRO_0000213336" description="Pyridoxal kinase">
    <location>
        <begin position="1"/>
        <end position="312"/>
    </location>
</feature>
<feature type="active site" description="Proton acceptor" evidence="1">
    <location>
        <position position="235"/>
    </location>
</feature>
<feature type="binding site" evidence="1">
    <location>
        <position position="12"/>
    </location>
    <ligand>
        <name>pyridoxal</name>
        <dbReference type="ChEBI" id="CHEBI:17310"/>
    </ligand>
</feature>
<feature type="binding site" evidence="1">
    <location>
        <position position="47"/>
    </location>
    <ligand>
        <name>pyridoxal</name>
        <dbReference type="ChEBI" id="CHEBI:17310"/>
    </ligand>
</feature>
<feature type="binding site" evidence="1">
    <location>
        <position position="47"/>
    </location>
    <ligand>
        <name>pyridoxal 5'-phosphate</name>
        <dbReference type="ChEBI" id="CHEBI:597326"/>
    </ligand>
</feature>
<feature type="binding site" evidence="1">
    <location>
        <position position="113"/>
    </location>
    <ligand>
        <name>ATP</name>
        <dbReference type="ChEBI" id="CHEBI:30616"/>
    </ligand>
</feature>
<feature type="binding site" evidence="1">
    <location>
        <position position="113"/>
    </location>
    <ligand>
        <name>Na(+)</name>
        <dbReference type="ChEBI" id="CHEBI:29101"/>
    </ligand>
</feature>
<feature type="binding site" evidence="1">
    <location>
        <position position="118"/>
    </location>
    <ligand>
        <name>Mg(2+)</name>
        <dbReference type="ChEBI" id="CHEBI:18420"/>
    </ligand>
</feature>
<feature type="binding site" evidence="1">
    <location>
        <position position="148"/>
    </location>
    <ligand>
        <name>Na(+)</name>
        <dbReference type="ChEBI" id="CHEBI:29101"/>
    </ligand>
</feature>
<feature type="binding site" evidence="1">
    <location>
        <begin position="150"/>
        <end position="153"/>
    </location>
    <ligand>
        <name>ATP</name>
        <dbReference type="ChEBI" id="CHEBI:30616"/>
    </ligand>
</feature>
<feature type="binding site" evidence="1">
    <location>
        <begin position="186"/>
        <end position="187"/>
    </location>
    <ligand>
        <name>ATP</name>
        <dbReference type="ChEBI" id="CHEBI:30616"/>
    </ligand>
</feature>
<feature type="binding site" evidence="1">
    <location>
        <position position="186"/>
    </location>
    <ligand>
        <name>Na(+)</name>
        <dbReference type="ChEBI" id="CHEBI:29101"/>
    </ligand>
</feature>
<feature type="binding site" evidence="1">
    <location>
        <begin position="226"/>
        <end position="228"/>
    </location>
    <ligand>
        <name>ATP</name>
        <dbReference type="ChEBI" id="CHEBI:30616"/>
    </ligand>
</feature>
<feature type="binding site" evidence="1">
    <location>
        <position position="233"/>
    </location>
    <ligand>
        <name>ATP</name>
        <dbReference type="ChEBI" id="CHEBI:30616"/>
    </ligand>
</feature>
<feature type="binding site" evidence="1">
    <location>
        <begin position="234"/>
        <end position="235"/>
    </location>
    <ligand>
        <name>pyridoxal 5'-phosphate</name>
        <dbReference type="ChEBI" id="CHEBI:597326"/>
    </ligand>
</feature>
<feature type="modified residue" description="N-acetylmethionine" evidence="2">
    <location>
        <position position="1"/>
    </location>
</feature>
<feature type="modified residue" description="Phosphoserine" evidence="5">
    <location>
        <position position="59"/>
    </location>
</feature>
<feature type="modified residue" description="Phosphoserine" evidence="1">
    <location>
        <position position="164"/>
    </location>
</feature>
<feature type="modified residue" description="Phosphoserine" evidence="1">
    <location>
        <position position="213"/>
    </location>
</feature>
<feature type="modified residue" description="Phosphoserine" evidence="1">
    <location>
        <position position="285"/>
    </location>
</feature>
<feature type="sequence conflict" description="In Ref. 1; BAC38041." evidence="3" ref="1">
    <original>S</original>
    <variation>F</variation>
    <location>
        <position position="188"/>
    </location>
</feature>
<feature type="strand" evidence="7">
    <location>
        <begin position="6"/>
        <end position="17"/>
    </location>
</feature>
<feature type="helix" evidence="7">
    <location>
        <begin position="21"/>
        <end position="30"/>
    </location>
</feature>
<feature type="strand" evidence="7">
    <location>
        <begin position="34"/>
        <end position="45"/>
    </location>
</feature>
<feature type="strand" evidence="7">
    <location>
        <begin position="54"/>
        <end position="56"/>
    </location>
</feature>
<feature type="helix" evidence="7">
    <location>
        <begin position="59"/>
        <end position="71"/>
    </location>
</feature>
<feature type="strand" evidence="7">
    <location>
        <begin position="78"/>
        <end position="82"/>
    </location>
</feature>
<feature type="helix" evidence="7">
    <location>
        <begin position="88"/>
        <end position="104"/>
    </location>
</feature>
<feature type="strand" evidence="7">
    <location>
        <begin position="109"/>
        <end position="112"/>
    </location>
</feature>
<feature type="strand" evidence="6">
    <location>
        <begin position="117"/>
        <end position="120"/>
    </location>
</feature>
<feature type="strand" evidence="6">
    <location>
        <begin position="123"/>
        <end position="126"/>
    </location>
</feature>
<feature type="helix" evidence="7">
    <location>
        <begin position="132"/>
        <end position="138"/>
    </location>
</feature>
<feature type="helix" evidence="7">
    <location>
        <begin position="140"/>
        <end position="143"/>
    </location>
</feature>
<feature type="strand" evidence="7">
    <location>
        <begin position="145"/>
        <end position="147"/>
    </location>
</feature>
<feature type="helix" evidence="7">
    <location>
        <begin position="151"/>
        <end position="158"/>
    </location>
</feature>
<feature type="helix" evidence="7">
    <location>
        <begin position="165"/>
        <end position="178"/>
    </location>
</feature>
<feature type="strand" evidence="7">
    <location>
        <begin position="181"/>
        <end position="185"/>
    </location>
</feature>
<feature type="strand" evidence="7">
    <location>
        <begin position="198"/>
        <end position="208"/>
    </location>
</feature>
<feature type="strand" evidence="7">
    <location>
        <begin position="214"/>
        <end position="224"/>
    </location>
</feature>
<feature type="helix" evidence="7">
    <location>
        <begin position="233"/>
        <end position="247"/>
    </location>
</feature>
<feature type="helix" evidence="7">
    <location>
        <begin position="252"/>
        <end position="277"/>
    </location>
</feature>
<feature type="turn" evidence="7">
    <location>
        <begin position="286"/>
        <end position="289"/>
    </location>
</feature>
<feature type="helix" evidence="7">
    <location>
        <begin position="294"/>
        <end position="296"/>
    </location>
</feature>
<feature type="helix" evidence="7">
    <location>
        <begin position="297"/>
        <end position="301"/>
    </location>
</feature>
<organism>
    <name type="scientific">Mus musculus</name>
    <name type="common">Mouse</name>
    <dbReference type="NCBI Taxonomy" id="10090"/>
    <lineage>
        <taxon>Eukaryota</taxon>
        <taxon>Metazoa</taxon>
        <taxon>Chordata</taxon>
        <taxon>Craniata</taxon>
        <taxon>Vertebrata</taxon>
        <taxon>Euteleostomi</taxon>
        <taxon>Mammalia</taxon>
        <taxon>Eutheria</taxon>
        <taxon>Euarchontoglires</taxon>
        <taxon>Glires</taxon>
        <taxon>Rodentia</taxon>
        <taxon>Myomorpha</taxon>
        <taxon>Muroidea</taxon>
        <taxon>Muridae</taxon>
        <taxon>Murinae</taxon>
        <taxon>Mus</taxon>
        <taxon>Mus</taxon>
    </lineage>
</organism>